<proteinExistence type="inferred from homology"/>
<gene>
    <name evidence="1" type="primary">lexA</name>
    <name type="ordered locus">CLD_2845</name>
</gene>
<comment type="function">
    <text evidence="1">Represses a number of genes involved in the response to DNA damage (SOS response), including recA and lexA. In the presence of single-stranded DNA, RecA interacts with LexA causing an autocatalytic cleavage which disrupts the DNA-binding part of LexA, leading to derepression of the SOS regulon and eventually DNA repair.</text>
</comment>
<comment type="catalytic activity">
    <reaction evidence="1">
        <text>Hydrolysis of Ala-|-Gly bond in repressor LexA.</text>
        <dbReference type="EC" id="3.4.21.88"/>
    </reaction>
</comment>
<comment type="subunit">
    <text evidence="1">Homodimer.</text>
</comment>
<comment type="similarity">
    <text evidence="1">Belongs to the peptidase S24 family.</text>
</comment>
<accession>B1IM63</accession>
<dbReference type="EC" id="3.4.21.88" evidence="1"/>
<dbReference type="EMBL" id="CP000939">
    <property type="protein sequence ID" value="ACA46182.1"/>
    <property type="molecule type" value="Genomic_DNA"/>
</dbReference>
<dbReference type="RefSeq" id="WP_003358834.1">
    <property type="nucleotide sequence ID" value="NC_010516.1"/>
</dbReference>
<dbReference type="SMR" id="B1IM63"/>
<dbReference type="MEROPS" id="S24.001"/>
<dbReference type="KEGG" id="cbb:CLD_2845"/>
<dbReference type="HOGENOM" id="CLU_066192_45_1_9"/>
<dbReference type="Proteomes" id="UP000008541">
    <property type="component" value="Chromosome"/>
</dbReference>
<dbReference type="GO" id="GO:0003677">
    <property type="term" value="F:DNA binding"/>
    <property type="evidence" value="ECO:0007669"/>
    <property type="project" value="UniProtKB-UniRule"/>
</dbReference>
<dbReference type="GO" id="GO:0004252">
    <property type="term" value="F:serine-type endopeptidase activity"/>
    <property type="evidence" value="ECO:0007669"/>
    <property type="project" value="UniProtKB-UniRule"/>
</dbReference>
<dbReference type="GO" id="GO:0006281">
    <property type="term" value="P:DNA repair"/>
    <property type="evidence" value="ECO:0007669"/>
    <property type="project" value="UniProtKB-UniRule"/>
</dbReference>
<dbReference type="GO" id="GO:0006260">
    <property type="term" value="P:DNA replication"/>
    <property type="evidence" value="ECO:0007669"/>
    <property type="project" value="UniProtKB-UniRule"/>
</dbReference>
<dbReference type="GO" id="GO:0045892">
    <property type="term" value="P:negative regulation of DNA-templated transcription"/>
    <property type="evidence" value="ECO:0007669"/>
    <property type="project" value="UniProtKB-UniRule"/>
</dbReference>
<dbReference type="GO" id="GO:0006508">
    <property type="term" value="P:proteolysis"/>
    <property type="evidence" value="ECO:0007669"/>
    <property type="project" value="InterPro"/>
</dbReference>
<dbReference type="GO" id="GO:0009432">
    <property type="term" value="P:SOS response"/>
    <property type="evidence" value="ECO:0007669"/>
    <property type="project" value="UniProtKB-UniRule"/>
</dbReference>
<dbReference type="CDD" id="cd00090">
    <property type="entry name" value="HTH_ARSR"/>
    <property type="match status" value="1"/>
</dbReference>
<dbReference type="CDD" id="cd06529">
    <property type="entry name" value="S24_LexA-like"/>
    <property type="match status" value="1"/>
</dbReference>
<dbReference type="FunFam" id="1.10.10.10:FF:000009">
    <property type="entry name" value="LexA repressor"/>
    <property type="match status" value="1"/>
</dbReference>
<dbReference type="FunFam" id="2.10.109.10:FF:000001">
    <property type="entry name" value="LexA repressor"/>
    <property type="match status" value="1"/>
</dbReference>
<dbReference type="Gene3D" id="2.10.109.10">
    <property type="entry name" value="Umud Fragment, subunit A"/>
    <property type="match status" value="1"/>
</dbReference>
<dbReference type="Gene3D" id="1.10.10.10">
    <property type="entry name" value="Winged helix-like DNA-binding domain superfamily/Winged helix DNA-binding domain"/>
    <property type="match status" value="1"/>
</dbReference>
<dbReference type="HAMAP" id="MF_00015">
    <property type="entry name" value="LexA"/>
    <property type="match status" value="1"/>
</dbReference>
<dbReference type="InterPro" id="IPR011991">
    <property type="entry name" value="ArsR-like_HTH"/>
</dbReference>
<dbReference type="InterPro" id="IPR006200">
    <property type="entry name" value="LexA"/>
</dbReference>
<dbReference type="InterPro" id="IPR039418">
    <property type="entry name" value="LexA-like"/>
</dbReference>
<dbReference type="InterPro" id="IPR036286">
    <property type="entry name" value="LexA/Signal_pep-like_sf"/>
</dbReference>
<dbReference type="InterPro" id="IPR006199">
    <property type="entry name" value="LexA_DNA-bd_dom"/>
</dbReference>
<dbReference type="InterPro" id="IPR050077">
    <property type="entry name" value="LexA_repressor"/>
</dbReference>
<dbReference type="InterPro" id="IPR006197">
    <property type="entry name" value="Peptidase_S24_LexA"/>
</dbReference>
<dbReference type="InterPro" id="IPR015927">
    <property type="entry name" value="Peptidase_S24_S26A/B/C"/>
</dbReference>
<dbReference type="InterPro" id="IPR036388">
    <property type="entry name" value="WH-like_DNA-bd_sf"/>
</dbReference>
<dbReference type="InterPro" id="IPR036390">
    <property type="entry name" value="WH_DNA-bd_sf"/>
</dbReference>
<dbReference type="NCBIfam" id="TIGR00498">
    <property type="entry name" value="lexA"/>
    <property type="match status" value="1"/>
</dbReference>
<dbReference type="PANTHER" id="PTHR33516">
    <property type="entry name" value="LEXA REPRESSOR"/>
    <property type="match status" value="1"/>
</dbReference>
<dbReference type="PANTHER" id="PTHR33516:SF2">
    <property type="entry name" value="LEXA REPRESSOR-RELATED"/>
    <property type="match status" value="1"/>
</dbReference>
<dbReference type="Pfam" id="PF01726">
    <property type="entry name" value="LexA_DNA_bind"/>
    <property type="match status" value="1"/>
</dbReference>
<dbReference type="Pfam" id="PF00717">
    <property type="entry name" value="Peptidase_S24"/>
    <property type="match status" value="1"/>
</dbReference>
<dbReference type="PRINTS" id="PR00726">
    <property type="entry name" value="LEXASERPTASE"/>
</dbReference>
<dbReference type="SUPFAM" id="SSF51306">
    <property type="entry name" value="LexA/Signal peptidase"/>
    <property type="match status" value="1"/>
</dbReference>
<dbReference type="SUPFAM" id="SSF46785">
    <property type="entry name" value="Winged helix' DNA-binding domain"/>
    <property type="match status" value="1"/>
</dbReference>
<evidence type="ECO:0000255" key="1">
    <source>
        <dbReference type="HAMAP-Rule" id="MF_00015"/>
    </source>
</evidence>
<feature type="chain" id="PRO_1000089557" description="LexA repressor">
    <location>
        <begin position="1"/>
        <end position="201"/>
    </location>
</feature>
<feature type="DNA-binding region" description="H-T-H motif" evidence="1">
    <location>
        <begin position="29"/>
        <end position="49"/>
    </location>
</feature>
<feature type="active site" description="For autocatalytic cleavage activity" evidence="1">
    <location>
        <position position="125"/>
    </location>
</feature>
<feature type="active site" description="For autocatalytic cleavage activity" evidence="1">
    <location>
        <position position="162"/>
    </location>
</feature>
<feature type="site" description="Cleavage; by autolysis" evidence="1">
    <location>
        <begin position="89"/>
        <end position="90"/>
    </location>
</feature>
<reference key="1">
    <citation type="journal article" date="2007" name="PLoS ONE">
        <title>Analysis of the neurotoxin complex genes in Clostridium botulinum A1-A4 and B1 strains: BoNT/A3, /Ba4 and /B1 clusters are located within plasmids.</title>
        <authorList>
            <person name="Smith T.J."/>
            <person name="Hill K.K."/>
            <person name="Foley B.T."/>
            <person name="Detter J.C."/>
            <person name="Munk A.C."/>
            <person name="Bruce D.C."/>
            <person name="Doggett N.A."/>
            <person name="Smith L.A."/>
            <person name="Marks J.D."/>
            <person name="Xie G."/>
            <person name="Brettin T.S."/>
        </authorList>
    </citation>
    <scope>NUCLEOTIDE SEQUENCE [LARGE SCALE GENOMIC DNA]</scope>
    <source>
        <strain>Okra / Type B1</strain>
    </source>
</reference>
<sequence length="201" mass="22579">MNKSRIDKQNEVYNFIKLQIKEKGYPPSVREICKAVGLSSTSSVHFHLKRLEKEGLIKRDSSKTRAIEIVDPTSKKEVINVPIVGTITAGNPILAIENIEDVFPLPIDYVKNTKDLFMLKVSGESMIEAGILDGDLAIIEKTDSANNGDIVVALIDNEATLKRFFKESSYIRLQPENKSMKPIILENCKVLGRLVGIYRKY</sequence>
<organism>
    <name type="scientific">Clostridium botulinum (strain Okra / Type B1)</name>
    <dbReference type="NCBI Taxonomy" id="498213"/>
    <lineage>
        <taxon>Bacteria</taxon>
        <taxon>Bacillati</taxon>
        <taxon>Bacillota</taxon>
        <taxon>Clostridia</taxon>
        <taxon>Eubacteriales</taxon>
        <taxon>Clostridiaceae</taxon>
        <taxon>Clostridium</taxon>
    </lineage>
</organism>
<protein>
    <recommendedName>
        <fullName evidence="1">LexA repressor</fullName>
        <ecNumber evidence="1">3.4.21.88</ecNumber>
    </recommendedName>
</protein>
<keyword id="KW-0068">Autocatalytic cleavage</keyword>
<keyword id="KW-0227">DNA damage</keyword>
<keyword id="KW-0234">DNA repair</keyword>
<keyword id="KW-0235">DNA replication</keyword>
<keyword id="KW-0238">DNA-binding</keyword>
<keyword id="KW-0378">Hydrolase</keyword>
<keyword id="KW-0678">Repressor</keyword>
<keyword id="KW-0742">SOS response</keyword>
<keyword id="KW-0804">Transcription</keyword>
<keyword id="KW-0805">Transcription regulation</keyword>
<name>LEXA_CLOBK</name>